<name>SCAR3_MOUSE</name>
<keyword id="KW-0176">Collagen</keyword>
<keyword id="KW-0256">Endoplasmic reticulum</keyword>
<keyword id="KW-0325">Glycoprotein</keyword>
<keyword id="KW-0333">Golgi apparatus</keyword>
<keyword id="KW-0472">Membrane</keyword>
<keyword id="KW-1185">Reference proteome</keyword>
<keyword id="KW-0677">Repeat</keyword>
<keyword id="KW-0735">Signal-anchor</keyword>
<keyword id="KW-0812">Transmembrane</keyword>
<keyword id="KW-1133">Transmembrane helix</keyword>
<evidence type="ECO:0000250" key="1"/>
<evidence type="ECO:0000255" key="2"/>
<evidence type="ECO:0000256" key="3">
    <source>
        <dbReference type="SAM" id="MobiDB-lite"/>
    </source>
</evidence>
<evidence type="ECO:0000305" key="4"/>
<dbReference type="EMBL" id="AK048423">
    <property type="protein sequence ID" value="BAC33332.1"/>
    <property type="molecule type" value="mRNA"/>
</dbReference>
<dbReference type="EMBL" id="AK054188">
    <property type="protein sequence ID" value="BAC35687.1"/>
    <property type="molecule type" value="mRNA"/>
</dbReference>
<dbReference type="EMBL" id="BC051636">
    <property type="protein sequence ID" value="AAH51636.2"/>
    <property type="molecule type" value="mRNA"/>
</dbReference>
<dbReference type="CCDS" id="CCDS49524.1"/>
<dbReference type="RefSeq" id="NP_766192.1">
    <property type="nucleotide sequence ID" value="NM_172604.3"/>
</dbReference>
<dbReference type="SMR" id="Q8C850"/>
<dbReference type="FunCoup" id="Q8C850">
    <property type="interactions" value="163"/>
</dbReference>
<dbReference type="STRING" id="10090.ENSMUSP00000046525"/>
<dbReference type="GlyCosmos" id="Q8C850">
    <property type="glycosylation" value="10 sites, No reported glycans"/>
</dbReference>
<dbReference type="GlyGen" id="Q8C850">
    <property type="glycosylation" value="11 sites, 6 N-linked glycans (9 sites)"/>
</dbReference>
<dbReference type="iPTMnet" id="Q8C850"/>
<dbReference type="PhosphoSitePlus" id="Q8C850"/>
<dbReference type="jPOST" id="Q8C850"/>
<dbReference type="PaxDb" id="10090-ENSMUSP00000046525"/>
<dbReference type="ProteomicsDB" id="256740"/>
<dbReference type="Pumba" id="Q8C850"/>
<dbReference type="Antibodypedia" id="23041">
    <property type="antibodies" value="109 antibodies from 27 providers"/>
</dbReference>
<dbReference type="DNASU" id="219151"/>
<dbReference type="Ensembl" id="ENSMUST00000042046.5">
    <property type="protein sequence ID" value="ENSMUSP00000046525.4"/>
    <property type="gene ID" value="ENSMUSG00000034463.5"/>
</dbReference>
<dbReference type="GeneID" id="219151"/>
<dbReference type="KEGG" id="mmu:219151"/>
<dbReference type="UCSC" id="uc007ujr.1">
    <property type="organism name" value="mouse"/>
</dbReference>
<dbReference type="AGR" id="MGI:2444418"/>
<dbReference type="CTD" id="51435"/>
<dbReference type="MGI" id="MGI:2444418">
    <property type="gene designation" value="Scara3"/>
</dbReference>
<dbReference type="VEuPathDB" id="HostDB:ENSMUSG00000034463"/>
<dbReference type="eggNOG" id="ENOG502QV37">
    <property type="taxonomic scope" value="Eukaryota"/>
</dbReference>
<dbReference type="GeneTree" id="ENSGT00940000158238"/>
<dbReference type="HOGENOM" id="CLU_027961_0_0_1"/>
<dbReference type="InParanoid" id="Q8C850"/>
<dbReference type="OMA" id="DLAQECY"/>
<dbReference type="OrthoDB" id="5835334at2759"/>
<dbReference type="PhylomeDB" id="Q8C850"/>
<dbReference type="TreeFam" id="TF332426"/>
<dbReference type="BioGRID-ORCS" id="219151">
    <property type="hits" value="2 hits in 76 CRISPR screens"/>
</dbReference>
<dbReference type="PRO" id="PR:Q8C850"/>
<dbReference type="Proteomes" id="UP000000589">
    <property type="component" value="Chromosome 14"/>
</dbReference>
<dbReference type="RNAct" id="Q8C850">
    <property type="molecule type" value="protein"/>
</dbReference>
<dbReference type="Bgee" id="ENSMUSG00000034463">
    <property type="expression patterns" value="Expressed in molar tooth and 215 other cell types or tissues"/>
</dbReference>
<dbReference type="GO" id="GO:0005581">
    <property type="term" value="C:collagen trimer"/>
    <property type="evidence" value="ECO:0007669"/>
    <property type="project" value="UniProtKB-KW"/>
</dbReference>
<dbReference type="GO" id="GO:0005789">
    <property type="term" value="C:endoplasmic reticulum membrane"/>
    <property type="evidence" value="ECO:0007669"/>
    <property type="project" value="UniProtKB-SubCell"/>
</dbReference>
<dbReference type="GO" id="GO:0000139">
    <property type="term" value="C:Golgi membrane"/>
    <property type="evidence" value="ECO:0007669"/>
    <property type="project" value="UniProtKB-SubCell"/>
</dbReference>
<dbReference type="InterPro" id="IPR008160">
    <property type="entry name" value="Collagen"/>
</dbReference>
<dbReference type="InterPro" id="IPR052376">
    <property type="entry name" value="Oxidative_Scav/Glycosyltrans"/>
</dbReference>
<dbReference type="PANTHER" id="PTHR39082">
    <property type="entry name" value="PHOSPHOLIPASE C-BETA-2-RELATED"/>
    <property type="match status" value="1"/>
</dbReference>
<dbReference type="PANTHER" id="PTHR39082:SF1">
    <property type="entry name" value="SCAVENGER RECEPTOR CLASS A MEMBER 3"/>
    <property type="match status" value="1"/>
</dbReference>
<dbReference type="Pfam" id="PF01391">
    <property type="entry name" value="Collagen"/>
    <property type="match status" value="3"/>
</dbReference>
<feature type="chain" id="PRO_0000181634" description="Scavenger receptor class A member 3">
    <location>
        <begin position="1"/>
        <end position="606"/>
    </location>
</feature>
<feature type="topological domain" description="Cytoplasmic" evidence="2">
    <location>
        <begin position="1"/>
        <end position="56"/>
    </location>
</feature>
<feature type="transmembrane region" description="Helical; Signal-anchor for type II membrane protein" evidence="2">
    <location>
        <begin position="57"/>
        <end position="77"/>
    </location>
</feature>
<feature type="topological domain" description="Extracellular" evidence="2">
    <location>
        <begin position="78"/>
        <end position="606"/>
    </location>
</feature>
<feature type="domain" description="Collagen-like 1">
    <location>
        <begin position="456"/>
        <end position="558"/>
    </location>
</feature>
<feature type="domain" description="Collagen-like 2">
    <location>
        <begin position="559"/>
        <end position="601"/>
    </location>
</feature>
<feature type="region of interest" description="Disordered" evidence="3">
    <location>
        <begin position="455"/>
        <end position="606"/>
    </location>
</feature>
<feature type="compositionally biased region" description="Low complexity" evidence="3">
    <location>
        <begin position="497"/>
        <end position="516"/>
    </location>
</feature>
<feature type="compositionally biased region" description="Gly residues" evidence="3">
    <location>
        <begin position="526"/>
        <end position="535"/>
    </location>
</feature>
<feature type="compositionally biased region" description="Pro residues" evidence="3">
    <location>
        <begin position="548"/>
        <end position="558"/>
    </location>
</feature>
<feature type="compositionally biased region" description="Pro residues" evidence="3">
    <location>
        <begin position="591"/>
        <end position="606"/>
    </location>
</feature>
<feature type="glycosylation site" description="N-linked (GlcNAc...) asparagine" evidence="2">
    <location>
        <position position="115"/>
    </location>
</feature>
<feature type="glycosylation site" description="N-linked (GlcNAc...) asparagine" evidence="2">
    <location>
        <position position="182"/>
    </location>
</feature>
<feature type="glycosylation site" description="N-linked (GlcNAc...) asparagine" evidence="2">
    <location>
        <position position="224"/>
    </location>
</feature>
<feature type="glycosylation site" description="N-linked (GlcNAc...) asparagine" evidence="2">
    <location>
        <position position="257"/>
    </location>
</feature>
<feature type="glycosylation site" description="N-linked (GlcNAc...) asparagine" evidence="2">
    <location>
        <position position="313"/>
    </location>
</feature>
<feature type="glycosylation site" description="N-linked (GlcNAc...) asparagine" evidence="2">
    <location>
        <position position="337"/>
    </location>
</feature>
<feature type="glycosylation site" description="N-linked (GlcNAc...) asparagine" evidence="2">
    <location>
        <position position="365"/>
    </location>
</feature>
<feature type="glycosylation site" description="N-linked (GlcNAc...) asparagine" evidence="2">
    <location>
        <position position="400"/>
    </location>
</feature>
<feature type="glycosylation site" description="N-linked (GlcNAc...) asparagine" evidence="2">
    <location>
        <position position="430"/>
    </location>
</feature>
<feature type="glycosylation site" description="N-linked (GlcNAc...) asparagine" evidence="2">
    <location>
        <position position="451"/>
    </location>
</feature>
<feature type="sequence conflict" description="In Ref. 1; BAC35687." evidence="4" ref="1">
    <original>T</original>
    <variation>I</variation>
    <location>
        <position position="241"/>
    </location>
</feature>
<organism>
    <name type="scientific">Mus musculus</name>
    <name type="common">Mouse</name>
    <dbReference type="NCBI Taxonomy" id="10090"/>
    <lineage>
        <taxon>Eukaryota</taxon>
        <taxon>Metazoa</taxon>
        <taxon>Chordata</taxon>
        <taxon>Craniata</taxon>
        <taxon>Vertebrata</taxon>
        <taxon>Euteleostomi</taxon>
        <taxon>Mammalia</taxon>
        <taxon>Eutheria</taxon>
        <taxon>Euarchontoglires</taxon>
        <taxon>Glires</taxon>
        <taxon>Rodentia</taxon>
        <taxon>Myomorpha</taxon>
        <taxon>Muroidea</taxon>
        <taxon>Muridae</taxon>
        <taxon>Murinae</taxon>
        <taxon>Mus</taxon>
        <taxon>Mus</taxon>
    </lineage>
</organism>
<reference key="1">
    <citation type="journal article" date="2005" name="Science">
        <title>The transcriptional landscape of the mammalian genome.</title>
        <authorList>
            <person name="Carninci P."/>
            <person name="Kasukawa T."/>
            <person name="Katayama S."/>
            <person name="Gough J."/>
            <person name="Frith M.C."/>
            <person name="Maeda N."/>
            <person name="Oyama R."/>
            <person name="Ravasi T."/>
            <person name="Lenhard B."/>
            <person name="Wells C."/>
            <person name="Kodzius R."/>
            <person name="Shimokawa K."/>
            <person name="Bajic V.B."/>
            <person name="Brenner S.E."/>
            <person name="Batalov S."/>
            <person name="Forrest A.R."/>
            <person name="Zavolan M."/>
            <person name="Davis M.J."/>
            <person name="Wilming L.G."/>
            <person name="Aidinis V."/>
            <person name="Allen J.E."/>
            <person name="Ambesi-Impiombato A."/>
            <person name="Apweiler R."/>
            <person name="Aturaliya R.N."/>
            <person name="Bailey T.L."/>
            <person name="Bansal M."/>
            <person name="Baxter L."/>
            <person name="Beisel K.W."/>
            <person name="Bersano T."/>
            <person name="Bono H."/>
            <person name="Chalk A.M."/>
            <person name="Chiu K.P."/>
            <person name="Choudhary V."/>
            <person name="Christoffels A."/>
            <person name="Clutterbuck D.R."/>
            <person name="Crowe M.L."/>
            <person name="Dalla E."/>
            <person name="Dalrymple B.P."/>
            <person name="de Bono B."/>
            <person name="Della Gatta G."/>
            <person name="di Bernardo D."/>
            <person name="Down T."/>
            <person name="Engstrom P."/>
            <person name="Fagiolini M."/>
            <person name="Faulkner G."/>
            <person name="Fletcher C.F."/>
            <person name="Fukushima T."/>
            <person name="Furuno M."/>
            <person name="Futaki S."/>
            <person name="Gariboldi M."/>
            <person name="Georgii-Hemming P."/>
            <person name="Gingeras T.R."/>
            <person name="Gojobori T."/>
            <person name="Green R.E."/>
            <person name="Gustincich S."/>
            <person name="Harbers M."/>
            <person name="Hayashi Y."/>
            <person name="Hensch T.K."/>
            <person name="Hirokawa N."/>
            <person name="Hill D."/>
            <person name="Huminiecki L."/>
            <person name="Iacono M."/>
            <person name="Ikeo K."/>
            <person name="Iwama A."/>
            <person name="Ishikawa T."/>
            <person name="Jakt M."/>
            <person name="Kanapin A."/>
            <person name="Katoh M."/>
            <person name="Kawasawa Y."/>
            <person name="Kelso J."/>
            <person name="Kitamura H."/>
            <person name="Kitano H."/>
            <person name="Kollias G."/>
            <person name="Krishnan S.P."/>
            <person name="Kruger A."/>
            <person name="Kummerfeld S.K."/>
            <person name="Kurochkin I.V."/>
            <person name="Lareau L.F."/>
            <person name="Lazarevic D."/>
            <person name="Lipovich L."/>
            <person name="Liu J."/>
            <person name="Liuni S."/>
            <person name="McWilliam S."/>
            <person name="Madan Babu M."/>
            <person name="Madera M."/>
            <person name="Marchionni L."/>
            <person name="Matsuda H."/>
            <person name="Matsuzawa S."/>
            <person name="Miki H."/>
            <person name="Mignone F."/>
            <person name="Miyake S."/>
            <person name="Morris K."/>
            <person name="Mottagui-Tabar S."/>
            <person name="Mulder N."/>
            <person name="Nakano N."/>
            <person name="Nakauchi H."/>
            <person name="Ng P."/>
            <person name="Nilsson R."/>
            <person name="Nishiguchi S."/>
            <person name="Nishikawa S."/>
            <person name="Nori F."/>
            <person name="Ohara O."/>
            <person name="Okazaki Y."/>
            <person name="Orlando V."/>
            <person name="Pang K.C."/>
            <person name="Pavan W.J."/>
            <person name="Pavesi G."/>
            <person name="Pesole G."/>
            <person name="Petrovsky N."/>
            <person name="Piazza S."/>
            <person name="Reed J."/>
            <person name="Reid J.F."/>
            <person name="Ring B.Z."/>
            <person name="Ringwald M."/>
            <person name="Rost B."/>
            <person name="Ruan Y."/>
            <person name="Salzberg S.L."/>
            <person name="Sandelin A."/>
            <person name="Schneider C."/>
            <person name="Schoenbach C."/>
            <person name="Sekiguchi K."/>
            <person name="Semple C.A."/>
            <person name="Seno S."/>
            <person name="Sessa L."/>
            <person name="Sheng Y."/>
            <person name="Shibata Y."/>
            <person name="Shimada H."/>
            <person name="Shimada K."/>
            <person name="Silva D."/>
            <person name="Sinclair B."/>
            <person name="Sperling S."/>
            <person name="Stupka E."/>
            <person name="Sugiura K."/>
            <person name="Sultana R."/>
            <person name="Takenaka Y."/>
            <person name="Taki K."/>
            <person name="Tammoja K."/>
            <person name="Tan S.L."/>
            <person name="Tang S."/>
            <person name="Taylor M.S."/>
            <person name="Tegner J."/>
            <person name="Teichmann S.A."/>
            <person name="Ueda H.R."/>
            <person name="van Nimwegen E."/>
            <person name="Verardo R."/>
            <person name="Wei C.L."/>
            <person name="Yagi K."/>
            <person name="Yamanishi H."/>
            <person name="Zabarovsky E."/>
            <person name="Zhu S."/>
            <person name="Zimmer A."/>
            <person name="Hide W."/>
            <person name="Bult C."/>
            <person name="Grimmond S.M."/>
            <person name="Teasdale R.D."/>
            <person name="Liu E.T."/>
            <person name="Brusic V."/>
            <person name="Quackenbush J."/>
            <person name="Wahlestedt C."/>
            <person name="Mattick J.S."/>
            <person name="Hume D.A."/>
            <person name="Kai C."/>
            <person name="Sasaki D."/>
            <person name="Tomaru Y."/>
            <person name="Fukuda S."/>
            <person name="Kanamori-Katayama M."/>
            <person name="Suzuki M."/>
            <person name="Aoki J."/>
            <person name="Arakawa T."/>
            <person name="Iida J."/>
            <person name="Imamura K."/>
            <person name="Itoh M."/>
            <person name="Kato T."/>
            <person name="Kawaji H."/>
            <person name="Kawagashira N."/>
            <person name="Kawashima T."/>
            <person name="Kojima M."/>
            <person name="Kondo S."/>
            <person name="Konno H."/>
            <person name="Nakano K."/>
            <person name="Ninomiya N."/>
            <person name="Nishio T."/>
            <person name="Okada M."/>
            <person name="Plessy C."/>
            <person name="Shibata K."/>
            <person name="Shiraki T."/>
            <person name="Suzuki S."/>
            <person name="Tagami M."/>
            <person name="Waki K."/>
            <person name="Watahiki A."/>
            <person name="Okamura-Oho Y."/>
            <person name="Suzuki H."/>
            <person name="Kawai J."/>
            <person name="Hayashizaki Y."/>
        </authorList>
    </citation>
    <scope>NUCLEOTIDE SEQUENCE [LARGE SCALE MRNA]</scope>
    <source>
        <strain>C57BL/6J</strain>
        <tissue>Head</tissue>
        <tissue>Oviduct</tissue>
    </source>
</reference>
<reference key="2">
    <citation type="journal article" date="2004" name="Genome Res.">
        <title>The status, quality, and expansion of the NIH full-length cDNA project: the Mammalian Gene Collection (MGC).</title>
        <authorList>
            <consortium name="The MGC Project Team"/>
        </authorList>
    </citation>
    <scope>NUCLEOTIDE SEQUENCE [LARGE SCALE MRNA]</scope>
    <source>
        <tissue>Limb</tissue>
    </source>
</reference>
<protein>
    <recommendedName>
        <fullName>Scavenger receptor class A member 3</fullName>
    </recommendedName>
</protein>
<comment type="function">
    <text evidence="1">Seems to protect cells by scavenging oxidative molecules or harmful products of oxidation.</text>
</comment>
<comment type="subcellular location">
    <subcellularLocation>
        <location evidence="1">Endoplasmic reticulum membrane</location>
        <topology evidence="1">Single-pass type II membrane protein</topology>
    </subcellularLocation>
    <subcellularLocation>
        <location evidence="1">Golgi apparatus membrane</location>
        <topology evidence="1">Single-pass type II membrane protein</topology>
    </subcellularLocation>
    <text evidence="1">Endoplasmic reticulum and/or Golgi.</text>
</comment>
<sequence>MKVRSAGSDRDVLCVTEEDLAGEDEDMPSFPCTQEGRAGPRCNRCQKNLSLHTSVRILYLFLTLLLVAVAVLASLVFRKVDSLSEDISLAQSIYNKKLVSMQENLQGLDPKALINCSFCREAEQLGQEIRKVQEELEGLQKMLLAQEVQLDQTSQTHELLSTRSSQISQEMGSCSFSIHQVNQSLGLFLAQVRGWQATTAGMDITLKDLTQECYDVKAAVHQINFTVGQTAEWIHGIQRKTDEETLTLQKIVTDWQNYTRLFGGLRTTSAKTGEIVKTIQTTLGASSQRISQNSESMHDLVLQVMGLQLQLDNISSFLDDHEENMHDLQYHTRYAQNRTVERFESLEGRMASHEIEIGTIFTNINATDNHVHSMLKYLDDVRLSCTLGFHTHAEELYYLNKSVSLMLGTTDLLRERFSLLSARLDFNVRNLSMIMEEMKAVDTHHGEILRNVTVIRGVPGPPGPRGLKGDTGVKGPVGSRGPKGDPGNLGPPGPQGPQGQPGEPGPVGERGPAGPRGFPGLKGSKGSFGTGGPRGQPGPKGDVGPLGPEGPPGSPGPSGPQGKPGISGKTGSPGQRGATGPKGEPGIQGPPGLPGPPGPPGNQSPY</sequence>
<proteinExistence type="evidence at transcript level"/>
<gene>
    <name type="primary">Scara3</name>
</gene>
<accession>Q8C850</accession>
<accession>Q8C6N1</accession>